<proteinExistence type="inferred from homology"/>
<dbReference type="EMBL" id="CP000114">
    <property type="protein sequence ID" value="ABA46341.1"/>
    <property type="molecule type" value="Genomic_DNA"/>
</dbReference>
<dbReference type="RefSeq" id="WP_000817930.1">
    <property type="nucleotide sequence ID" value="NC_007432.1"/>
</dbReference>
<dbReference type="SMR" id="Q3K1A9"/>
<dbReference type="KEGG" id="sak:SAK_1073"/>
<dbReference type="HOGENOM" id="CLU_027562_9_6_9"/>
<dbReference type="GO" id="GO:0005737">
    <property type="term" value="C:cytoplasm"/>
    <property type="evidence" value="ECO:0007669"/>
    <property type="project" value="UniProtKB-SubCell"/>
</dbReference>
<dbReference type="GO" id="GO:0003677">
    <property type="term" value="F:DNA binding"/>
    <property type="evidence" value="ECO:0007669"/>
    <property type="project" value="UniProtKB-KW"/>
</dbReference>
<dbReference type="GO" id="GO:0009037">
    <property type="term" value="F:tyrosine-based site-specific recombinase activity"/>
    <property type="evidence" value="ECO:0007669"/>
    <property type="project" value="UniProtKB-UniRule"/>
</dbReference>
<dbReference type="GO" id="GO:0051301">
    <property type="term" value="P:cell division"/>
    <property type="evidence" value="ECO:0007669"/>
    <property type="project" value="UniProtKB-KW"/>
</dbReference>
<dbReference type="GO" id="GO:0007059">
    <property type="term" value="P:chromosome segregation"/>
    <property type="evidence" value="ECO:0007669"/>
    <property type="project" value="UniProtKB-UniRule"/>
</dbReference>
<dbReference type="GO" id="GO:0006310">
    <property type="term" value="P:DNA recombination"/>
    <property type="evidence" value="ECO:0007669"/>
    <property type="project" value="UniProtKB-UniRule"/>
</dbReference>
<dbReference type="CDD" id="cd00397">
    <property type="entry name" value="DNA_BRE_C"/>
    <property type="match status" value="1"/>
</dbReference>
<dbReference type="Gene3D" id="1.10.150.130">
    <property type="match status" value="1"/>
</dbReference>
<dbReference type="Gene3D" id="1.10.443.10">
    <property type="entry name" value="Intergrase catalytic core"/>
    <property type="match status" value="1"/>
</dbReference>
<dbReference type="HAMAP" id="MF_01816">
    <property type="entry name" value="Recomb_XerS"/>
    <property type="match status" value="1"/>
</dbReference>
<dbReference type="InterPro" id="IPR044068">
    <property type="entry name" value="CB"/>
</dbReference>
<dbReference type="InterPro" id="IPR011010">
    <property type="entry name" value="DNA_brk_join_enz"/>
</dbReference>
<dbReference type="InterPro" id="IPR013762">
    <property type="entry name" value="Integrase-like_cat_sf"/>
</dbReference>
<dbReference type="InterPro" id="IPR002104">
    <property type="entry name" value="Integrase_catalytic"/>
</dbReference>
<dbReference type="InterPro" id="IPR010998">
    <property type="entry name" value="Integrase_recombinase_N"/>
</dbReference>
<dbReference type="InterPro" id="IPR004107">
    <property type="entry name" value="Integrase_SAM-like_N"/>
</dbReference>
<dbReference type="InterPro" id="IPR023670">
    <property type="entry name" value="Recomb_XerS"/>
</dbReference>
<dbReference type="InterPro" id="IPR050090">
    <property type="entry name" value="Tyrosine_recombinase_XerCD"/>
</dbReference>
<dbReference type="NCBIfam" id="NF003462">
    <property type="entry name" value="PRK05084.1"/>
    <property type="match status" value="1"/>
</dbReference>
<dbReference type="PANTHER" id="PTHR30349">
    <property type="entry name" value="PHAGE INTEGRASE-RELATED"/>
    <property type="match status" value="1"/>
</dbReference>
<dbReference type="PANTHER" id="PTHR30349:SF77">
    <property type="entry name" value="TYROSINE RECOMBINASE XERC"/>
    <property type="match status" value="1"/>
</dbReference>
<dbReference type="Pfam" id="PF02899">
    <property type="entry name" value="Phage_int_SAM_1"/>
    <property type="match status" value="1"/>
</dbReference>
<dbReference type="Pfam" id="PF00589">
    <property type="entry name" value="Phage_integrase"/>
    <property type="match status" value="1"/>
</dbReference>
<dbReference type="SUPFAM" id="SSF56349">
    <property type="entry name" value="DNA breaking-rejoining enzymes"/>
    <property type="match status" value="1"/>
</dbReference>
<dbReference type="PROSITE" id="PS51900">
    <property type="entry name" value="CB"/>
    <property type="match status" value="1"/>
</dbReference>
<dbReference type="PROSITE" id="PS51898">
    <property type="entry name" value="TYR_RECOMBINASE"/>
    <property type="match status" value="1"/>
</dbReference>
<keyword id="KW-0131">Cell cycle</keyword>
<keyword id="KW-0132">Cell division</keyword>
<keyword id="KW-0159">Chromosome partition</keyword>
<keyword id="KW-0963">Cytoplasm</keyword>
<keyword id="KW-0229">DNA integration</keyword>
<keyword id="KW-0233">DNA recombination</keyword>
<keyword id="KW-0238">DNA-binding</keyword>
<feature type="chain" id="PRO_1000070247" description="Tyrosine recombinase XerS">
    <location>
        <begin position="1"/>
        <end position="356"/>
    </location>
</feature>
<feature type="domain" description="Core-binding (CB)" evidence="3">
    <location>
        <begin position="16"/>
        <end position="121"/>
    </location>
</feature>
<feature type="domain" description="Tyr recombinase" evidence="2">
    <location>
        <begin position="169"/>
        <end position="354"/>
    </location>
</feature>
<feature type="active site" evidence="1">
    <location>
        <position position="210"/>
    </location>
</feature>
<feature type="active site" evidence="1">
    <location>
        <position position="234"/>
    </location>
</feature>
<feature type="active site" evidence="1">
    <location>
        <position position="306"/>
    </location>
</feature>
<feature type="active site" evidence="1">
    <location>
        <position position="309"/>
    </location>
</feature>
<feature type="active site" evidence="1">
    <location>
        <position position="332"/>
    </location>
</feature>
<feature type="active site" description="O-(3'-phospho-DNA)-tyrosine intermediate" evidence="1">
    <location>
        <position position="341"/>
    </location>
</feature>
<gene>
    <name evidence="1" type="primary">xerS</name>
    <name type="ordered locus">SAK_1073</name>
</gene>
<sequence length="356" mass="41362">MKRELLLEKIDELKEIMPWYVLEYYQSKLSVPYSFTTLYEYLKEYRRFLEWLLDSGVANCHHIAEIELSVLENLTKKDMEAFILYLRERPLLNANTRQNGVSQTTINRTLSALSSLFKYLTEEVENADGEPYFYRNVMKKVSTKKKKETLASRAENIKQKLFLGNETIEFLEYIDCEYQNKLSKRALAFFNKNKERDLAIIALLLASGVRLSEAVNLDLKDINLNVMVIDVTRKGGKRDSVNVASFAKPYLANYLDIRKNRYKAENQDIALFLSEYRGVPNRIDASSVEKMVAKYSQDFKVRVTPHKLRHTLATRLYDATKSQVLVSHQLGHASTQVTDLYTHIVNDEQKNALDKL</sequence>
<name>XERS_STRA1</name>
<comment type="function">
    <text evidence="1">Site-specific tyrosine recombinase, which acts by catalyzing the cutting and rejoining of the recombining DNA molecules. Essential to convert dimers of the bacterial chromosome into monomers to permit their segregation at cell division.</text>
</comment>
<comment type="activity regulation">
    <text evidence="1">FtsK is required for recombination.</text>
</comment>
<comment type="subcellular location">
    <subcellularLocation>
        <location evidence="1">Cytoplasm</location>
    </subcellularLocation>
</comment>
<comment type="similarity">
    <text evidence="1">Belongs to the 'phage' integrase family. XerS subfamily.</text>
</comment>
<protein>
    <recommendedName>
        <fullName evidence="1">Tyrosine recombinase XerS</fullName>
    </recommendedName>
</protein>
<accession>Q3K1A9</accession>
<organism>
    <name type="scientific">Streptococcus agalactiae serotype Ia (strain ATCC 27591 / A909 / CDC SS700)</name>
    <dbReference type="NCBI Taxonomy" id="205921"/>
    <lineage>
        <taxon>Bacteria</taxon>
        <taxon>Bacillati</taxon>
        <taxon>Bacillota</taxon>
        <taxon>Bacilli</taxon>
        <taxon>Lactobacillales</taxon>
        <taxon>Streptococcaceae</taxon>
        <taxon>Streptococcus</taxon>
    </lineage>
</organism>
<evidence type="ECO:0000255" key="1">
    <source>
        <dbReference type="HAMAP-Rule" id="MF_01816"/>
    </source>
</evidence>
<evidence type="ECO:0000255" key="2">
    <source>
        <dbReference type="PROSITE-ProRule" id="PRU01246"/>
    </source>
</evidence>
<evidence type="ECO:0000255" key="3">
    <source>
        <dbReference type="PROSITE-ProRule" id="PRU01248"/>
    </source>
</evidence>
<reference key="1">
    <citation type="journal article" date="2005" name="Proc. Natl. Acad. Sci. U.S.A.">
        <title>Genome analysis of multiple pathogenic isolates of Streptococcus agalactiae: implications for the microbial 'pan-genome'.</title>
        <authorList>
            <person name="Tettelin H."/>
            <person name="Masignani V."/>
            <person name="Cieslewicz M.J."/>
            <person name="Donati C."/>
            <person name="Medini D."/>
            <person name="Ward N.L."/>
            <person name="Angiuoli S.V."/>
            <person name="Crabtree J."/>
            <person name="Jones A.L."/>
            <person name="Durkin A.S."/>
            <person name="DeBoy R.T."/>
            <person name="Davidsen T.M."/>
            <person name="Mora M."/>
            <person name="Scarselli M."/>
            <person name="Margarit y Ros I."/>
            <person name="Peterson J.D."/>
            <person name="Hauser C.R."/>
            <person name="Sundaram J.P."/>
            <person name="Nelson W.C."/>
            <person name="Madupu R."/>
            <person name="Brinkac L.M."/>
            <person name="Dodson R.J."/>
            <person name="Rosovitz M.J."/>
            <person name="Sullivan S.A."/>
            <person name="Daugherty S.C."/>
            <person name="Haft D.H."/>
            <person name="Selengut J."/>
            <person name="Gwinn M.L."/>
            <person name="Zhou L."/>
            <person name="Zafar N."/>
            <person name="Khouri H."/>
            <person name="Radune D."/>
            <person name="Dimitrov G."/>
            <person name="Watkins K."/>
            <person name="O'Connor K.J."/>
            <person name="Smith S."/>
            <person name="Utterback T.R."/>
            <person name="White O."/>
            <person name="Rubens C.E."/>
            <person name="Grandi G."/>
            <person name="Madoff L.C."/>
            <person name="Kasper D.L."/>
            <person name="Telford J.L."/>
            <person name="Wessels M.R."/>
            <person name="Rappuoli R."/>
            <person name="Fraser C.M."/>
        </authorList>
    </citation>
    <scope>NUCLEOTIDE SEQUENCE [LARGE SCALE GENOMIC DNA]</scope>
    <source>
        <strain>ATCC 27591 / A909 / CDC SS700</strain>
    </source>
</reference>